<gene>
    <name type="ordered locus">MPN_268</name>
    <name type="ORF">A65_orf117</name>
    <name type="ORF">MP565</name>
</gene>
<protein>
    <recommendedName>
        <fullName>Putative phosphotransferase enzyme IIB component MPN_268</fullName>
        <ecNumber>2.7.1.-</ecNumber>
    </recommendedName>
    <alternativeName>
        <fullName>Putative PTS system EIIB component</fullName>
    </alternativeName>
</protein>
<evidence type="ECO:0000250" key="1"/>
<evidence type="ECO:0000255" key="2"/>
<evidence type="ECO:0000255" key="3">
    <source>
        <dbReference type="PROSITE-ProRule" id="PRU00421"/>
    </source>
</evidence>
<evidence type="ECO:0000305" key="4"/>
<feature type="chain" id="PRO_0000210430" description="Putative phosphotransferase enzyme IIB component MPN_268">
    <location>
        <begin position="1"/>
        <end position="117"/>
    </location>
</feature>
<feature type="transmembrane region" description="Helical" evidence="2">
    <location>
        <begin position="1"/>
        <end position="21"/>
    </location>
</feature>
<feature type="domain" description="PTS EIIB type-1" evidence="3">
    <location>
        <begin position="42"/>
        <end position="117"/>
    </location>
</feature>
<organism>
    <name type="scientific">Mycoplasma pneumoniae (strain ATCC 29342 / M129 / Subtype 1)</name>
    <name type="common">Mycoplasmoides pneumoniae</name>
    <dbReference type="NCBI Taxonomy" id="272634"/>
    <lineage>
        <taxon>Bacteria</taxon>
        <taxon>Bacillati</taxon>
        <taxon>Mycoplasmatota</taxon>
        <taxon>Mycoplasmoidales</taxon>
        <taxon>Mycoplasmoidaceae</taxon>
        <taxon>Mycoplasmoides</taxon>
    </lineage>
</organism>
<accession>P75507</accession>
<reference key="1">
    <citation type="journal article" date="1996" name="Nucleic Acids Res.">
        <title>Complete sequence analysis of the genome of the bacterium Mycoplasma pneumoniae.</title>
        <authorList>
            <person name="Himmelreich R."/>
            <person name="Hilbert H."/>
            <person name="Plagens H."/>
            <person name="Pirkl E."/>
            <person name="Li B.-C."/>
            <person name="Herrmann R."/>
        </authorList>
    </citation>
    <scope>NUCLEOTIDE SEQUENCE [LARGE SCALE GENOMIC DNA]</scope>
    <source>
        <strain>ATCC 29342 / M129 / Subtype 1</strain>
    </source>
</reference>
<dbReference type="EC" id="2.7.1.-"/>
<dbReference type="EMBL" id="U00089">
    <property type="protein sequence ID" value="AAB96213.1"/>
    <property type="molecule type" value="Genomic_DNA"/>
</dbReference>
<dbReference type="PIR" id="S73891">
    <property type="entry name" value="S73891"/>
</dbReference>
<dbReference type="RefSeq" id="NP_109956.1">
    <property type="nucleotide sequence ID" value="NC_000912.1"/>
</dbReference>
<dbReference type="RefSeq" id="WP_010874625.1">
    <property type="nucleotide sequence ID" value="NZ_OU342337.1"/>
</dbReference>
<dbReference type="SMR" id="P75507"/>
<dbReference type="IntAct" id="P75507">
    <property type="interactions" value="2"/>
</dbReference>
<dbReference type="STRING" id="272634.MPN_268"/>
<dbReference type="EnsemblBacteria" id="AAB96213">
    <property type="protein sequence ID" value="AAB96213"/>
    <property type="gene ID" value="MPN_268"/>
</dbReference>
<dbReference type="KEGG" id="mpn:MPN_268"/>
<dbReference type="PATRIC" id="fig|272634.6.peg.287"/>
<dbReference type="HOGENOM" id="CLU_2082212_0_0_14"/>
<dbReference type="OrthoDB" id="9769191at2"/>
<dbReference type="BioCyc" id="MPNE272634:G1GJ3-419-MONOMER"/>
<dbReference type="Proteomes" id="UP000000808">
    <property type="component" value="Chromosome"/>
</dbReference>
<dbReference type="GO" id="GO:0016020">
    <property type="term" value="C:membrane"/>
    <property type="evidence" value="ECO:0007669"/>
    <property type="project" value="UniProtKB-SubCell"/>
</dbReference>
<dbReference type="GO" id="GO:0008982">
    <property type="term" value="F:protein-N(PI)-phosphohistidine-sugar phosphotransferase activity"/>
    <property type="evidence" value="ECO:0007669"/>
    <property type="project" value="InterPro"/>
</dbReference>
<dbReference type="GO" id="GO:0009401">
    <property type="term" value="P:phosphoenolpyruvate-dependent sugar phosphotransferase system"/>
    <property type="evidence" value="ECO:0007669"/>
    <property type="project" value="UniProtKB-KW"/>
</dbReference>
<dbReference type="Gene3D" id="3.30.1360.60">
    <property type="entry name" value="Glucose permease domain IIB"/>
    <property type="match status" value="1"/>
</dbReference>
<dbReference type="InterPro" id="IPR036878">
    <property type="entry name" value="Glu_permease_IIB"/>
</dbReference>
<dbReference type="InterPro" id="IPR001996">
    <property type="entry name" value="PTS_IIB_1"/>
</dbReference>
<dbReference type="SUPFAM" id="SSF55604">
    <property type="entry name" value="Glucose permease domain IIB"/>
    <property type="match status" value="1"/>
</dbReference>
<dbReference type="PROSITE" id="PS51098">
    <property type="entry name" value="PTS_EIIB_TYPE_1"/>
    <property type="match status" value="1"/>
</dbReference>
<name>Y268_MYCPN</name>
<sequence>MKVLLWIGYVLSFGLLYLYLVKRAKRAALQLNNKLVESHTIPFAVRDFIAACGGRTNFVSLRTSPTQLIVSFAKPELVQIAALQKLGIKGINKSQNQYRFVLGNFVNQLKQQIENER</sequence>
<proteinExistence type="inferred from homology"/>
<comment type="function">
    <text evidence="1">The phosphoenolpyruvate-dependent sugar phosphotransferase system (PTS), a major carbohydrate active -transport system, catalyzes the phosphorylation of incoming sugar substrates concomitant with their translocation across the cell membrane.</text>
</comment>
<comment type="subcellular location">
    <subcellularLocation>
        <location evidence="4">Membrane</location>
        <topology evidence="4">Single-pass membrane protein</topology>
    </subcellularLocation>
</comment>
<comment type="domain">
    <text>The EIIB domain is phosphorylated by phospho-EIIA on a cysteinyl or histidyl residue, depending on the transported sugar. Then, it transfers the phosphoryl group to the sugar substrate concomitantly with the sugar uptake processed by the EIIC domain.</text>
</comment>
<keyword id="KW-0472">Membrane</keyword>
<keyword id="KW-0597">Phosphoprotein</keyword>
<keyword id="KW-0598">Phosphotransferase system</keyword>
<keyword id="KW-1185">Reference proteome</keyword>
<keyword id="KW-0808">Transferase</keyword>
<keyword id="KW-0812">Transmembrane</keyword>
<keyword id="KW-1133">Transmembrane helix</keyword>